<evidence type="ECO:0000255" key="1">
    <source>
        <dbReference type="HAMAP-Rule" id="MF_03103"/>
    </source>
</evidence>
<evidence type="ECO:0000256" key="2">
    <source>
        <dbReference type="SAM" id="MobiDB-lite"/>
    </source>
</evidence>
<reference key="1">
    <citation type="journal article" date="2009" name="Nature">
        <title>Evolution of pathogenicity and sexual reproduction in eight Candida genomes.</title>
        <authorList>
            <person name="Butler G."/>
            <person name="Rasmussen M.D."/>
            <person name="Lin M.F."/>
            <person name="Santos M.A.S."/>
            <person name="Sakthikumar S."/>
            <person name="Munro C.A."/>
            <person name="Rheinbay E."/>
            <person name="Grabherr M."/>
            <person name="Forche A."/>
            <person name="Reedy J.L."/>
            <person name="Agrafioti I."/>
            <person name="Arnaud M.B."/>
            <person name="Bates S."/>
            <person name="Brown A.J.P."/>
            <person name="Brunke S."/>
            <person name="Costanzo M.C."/>
            <person name="Fitzpatrick D.A."/>
            <person name="de Groot P.W.J."/>
            <person name="Harris D."/>
            <person name="Hoyer L.L."/>
            <person name="Hube B."/>
            <person name="Klis F.M."/>
            <person name="Kodira C."/>
            <person name="Lennard N."/>
            <person name="Logue M.E."/>
            <person name="Martin R."/>
            <person name="Neiman A.M."/>
            <person name="Nikolaou E."/>
            <person name="Quail M.A."/>
            <person name="Quinn J."/>
            <person name="Santos M.C."/>
            <person name="Schmitzberger F.F."/>
            <person name="Sherlock G."/>
            <person name="Shah P."/>
            <person name="Silverstein K.A.T."/>
            <person name="Skrzypek M.S."/>
            <person name="Soll D."/>
            <person name="Staggs R."/>
            <person name="Stansfield I."/>
            <person name="Stumpf M.P.H."/>
            <person name="Sudbery P.E."/>
            <person name="Srikantha T."/>
            <person name="Zeng Q."/>
            <person name="Berman J."/>
            <person name="Berriman M."/>
            <person name="Heitman J."/>
            <person name="Gow N.A.R."/>
            <person name="Lorenz M.C."/>
            <person name="Birren B.W."/>
            <person name="Kellis M."/>
            <person name="Cuomo C.A."/>
        </authorList>
    </citation>
    <scope>NUCLEOTIDE SEQUENCE [LARGE SCALE GENOMIC DNA]</scope>
    <source>
        <strain>ATCC 42720</strain>
    </source>
</reference>
<gene>
    <name evidence="1" type="primary">MMM1</name>
    <name type="ORF">CLUG_01788</name>
</gene>
<comment type="function">
    <text evidence="1">Component of the ERMES/MDM complex, which serves as a molecular tether to connect the endoplasmic reticulum (ER) and mitochondria. Components of this complex are involved in the control of mitochondrial shape and protein biogenesis, and function in nonvesicular lipid trafficking between the ER and mitochondria. The MDM12-MMM1 subcomplex functions in the major beta-barrel assembly pathway that is responsible for biogenesis of all outer membrane beta-barrel proteins, and acts in a late step after the SAM complex. The MDM10-MDM12-MMM1 subcomplex further acts in the TOM40-specific pathway after the action of the MDM12-MMM1 complex. Essential for establishing and maintaining the structure of mitochondria and maintenance of mtDNA nucleoids.</text>
</comment>
<comment type="subunit">
    <text evidence="1">Homodimer. Component of the ER-mitochondria encounter structure (ERMES) or MDM complex, composed of MMM1, MDM10, MDM12 and MDM34. A MMM1 homodimer associates with one molecule of MDM12 on each side in a pairwise head-to-tail manner, and the SMP-LTD domains of MMM1 and MDM12 generate a continuous hydrophobic tunnel for phospholipid trafficking.</text>
</comment>
<comment type="subcellular location">
    <subcellularLocation>
        <location evidence="1">Endoplasmic reticulum membrane</location>
        <topology evidence="1">Single-pass type I membrane protein</topology>
    </subcellularLocation>
    <text evidence="1">The ERMES/MDM complex localizes to a few discrete foci (around 10 per single cell), that represent mitochondria-endoplasmic reticulum junctions. These foci are often found next to mtDNA nucleoids.</text>
</comment>
<comment type="domain">
    <text evidence="1">The SMP-LTD domain is a barrel-like domain that can bind various types of glycerophospholipids in its interior and mediate their transfer between two adjacent bilayers.</text>
</comment>
<comment type="similarity">
    <text evidence="1">Belongs to the MMM1 family.</text>
</comment>
<keyword id="KW-0256">Endoplasmic reticulum</keyword>
<keyword id="KW-0445">Lipid transport</keyword>
<keyword id="KW-0446">Lipid-binding</keyword>
<keyword id="KW-0472">Membrane</keyword>
<keyword id="KW-1185">Reference proteome</keyword>
<keyword id="KW-0812">Transmembrane</keyword>
<keyword id="KW-1133">Transmembrane helix</keyword>
<keyword id="KW-0813">Transport</keyword>
<dbReference type="EMBL" id="CH408077">
    <property type="protein sequence ID" value="EEQ37665.1"/>
    <property type="molecule type" value="Genomic_DNA"/>
</dbReference>
<dbReference type="RefSeq" id="XP_002618329.1">
    <property type="nucleotide sequence ID" value="XM_002618283.1"/>
</dbReference>
<dbReference type="SMR" id="C4Y0Q6"/>
<dbReference type="FunCoup" id="C4Y0Q6">
    <property type="interactions" value="86"/>
</dbReference>
<dbReference type="STRING" id="306902.C4Y0Q6"/>
<dbReference type="GeneID" id="8498407"/>
<dbReference type="KEGG" id="clu:CLUG_01788"/>
<dbReference type="VEuPathDB" id="FungiDB:CLUG_01788"/>
<dbReference type="HOGENOM" id="CLU_032730_2_0_1"/>
<dbReference type="InParanoid" id="C4Y0Q6"/>
<dbReference type="OMA" id="WSFTQGL"/>
<dbReference type="OrthoDB" id="121802at4891"/>
<dbReference type="Proteomes" id="UP000007703">
    <property type="component" value="Unassembled WGS sequence"/>
</dbReference>
<dbReference type="GO" id="GO:0005789">
    <property type="term" value="C:endoplasmic reticulum membrane"/>
    <property type="evidence" value="ECO:0007669"/>
    <property type="project" value="UniProtKB-SubCell"/>
</dbReference>
<dbReference type="GO" id="GO:0032865">
    <property type="term" value="C:ERMES complex"/>
    <property type="evidence" value="ECO:0007669"/>
    <property type="project" value="UniProtKB-UniRule"/>
</dbReference>
<dbReference type="GO" id="GO:0008289">
    <property type="term" value="F:lipid binding"/>
    <property type="evidence" value="ECO:0007669"/>
    <property type="project" value="UniProtKB-KW"/>
</dbReference>
<dbReference type="GO" id="GO:0000002">
    <property type="term" value="P:mitochondrial genome maintenance"/>
    <property type="evidence" value="ECO:0007669"/>
    <property type="project" value="UniProtKB-UniRule"/>
</dbReference>
<dbReference type="GO" id="GO:1990456">
    <property type="term" value="P:mitochondrion-endoplasmic reticulum membrane tethering"/>
    <property type="evidence" value="ECO:0007669"/>
    <property type="project" value="TreeGrafter"/>
</dbReference>
<dbReference type="GO" id="GO:0015914">
    <property type="term" value="P:phospholipid transport"/>
    <property type="evidence" value="ECO:0007669"/>
    <property type="project" value="TreeGrafter"/>
</dbReference>
<dbReference type="GO" id="GO:0045040">
    <property type="term" value="P:protein insertion into mitochondrial outer membrane"/>
    <property type="evidence" value="ECO:0007669"/>
    <property type="project" value="UniProtKB-UniRule"/>
</dbReference>
<dbReference type="CDD" id="cd21671">
    <property type="entry name" value="SMP_Mmm1"/>
    <property type="match status" value="1"/>
</dbReference>
<dbReference type="HAMAP" id="MF_03103">
    <property type="entry name" value="Mmm1"/>
    <property type="match status" value="1"/>
</dbReference>
<dbReference type="InterPro" id="IPR027537">
    <property type="entry name" value="Mmm1"/>
</dbReference>
<dbReference type="InterPro" id="IPR019411">
    <property type="entry name" value="MMM1_dom"/>
</dbReference>
<dbReference type="InterPro" id="IPR031468">
    <property type="entry name" value="SMP_LBD"/>
</dbReference>
<dbReference type="PANTHER" id="PTHR13466:SF0">
    <property type="entry name" value="SMP-LTD DOMAIN-CONTAINING PROTEIN"/>
    <property type="match status" value="1"/>
</dbReference>
<dbReference type="PANTHER" id="PTHR13466">
    <property type="entry name" value="TEX2 PROTEIN-RELATED"/>
    <property type="match status" value="1"/>
</dbReference>
<dbReference type="Pfam" id="PF10296">
    <property type="entry name" value="MMM1"/>
    <property type="match status" value="1"/>
</dbReference>
<dbReference type="PROSITE" id="PS51847">
    <property type="entry name" value="SMP"/>
    <property type="match status" value="1"/>
</dbReference>
<proteinExistence type="inferred from homology"/>
<name>MMM1_CLAL4</name>
<sequence length="348" mass="38401">MAGKADLGHTGISDNIVERQIFVPQPNNAWSFTQGLMCGQASVVVVLLVFIKFFVFSEAPPSSGAAKSKKKDISGVIVKREAKNTDDDDGVENGDSAKLATILEKTYYDVNNHNPESLDWFNVLIAQTISQLRCEALLSDNIYHSLNDFLETSDLPDFMDKITLTEIDIGDDFPIFSNCRIQHSADGTGRLEAKIDVDLSDTLTLGIETRLLLNHPRPLTAVLPVQLTVSMVRFSGCLTVSLVNTNDTDFVGTSKEENSSGGGTALMFSFSPDYRLEFSVKSLIGSRTKLQDVPKISDLVDSKLRNWFSDRCVEPKFQVVRLPSMWPRSKNTREPVGAGKTEKVNGNE</sequence>
<protein>
    <recommendedName>
        <fullName evidence="1">Maintenance of mitochondrial morphology protein 1</fullName>
    </recommendedName>
</protein>
<organism>
    <name type="scientific">Clavispora lusitaniae (strain ATCC 42720)</name>
    <name type="common">Yeast</name>
    <name type="synonym">Candida lusitaniae</name>
    <dbReference type="NCBI Taxonomy" id="306902"/>
    <lineage>
        <taxon>Eukaryota</taxon>
        <taxon>Fungi</taxon>
        <taxon>Dikarya</taxon>
        <taxon>Ascomycota</taxon>
        <taxon>Saccharomycotina</taxon>
        <taxon>Pichiomycetes</taxon>
        <taxon>Metschnikowiaceae</taxon>
        <taxon>Clavispora</taxon>
    </lineage>
</organism>
<accession>C4Y0Q6</accession>
<feature type="chain" id="PRO_0000384225" description="Maintenance of mitochondrial morphology protein 1">
    <location>
        <begin position="1"/>
        <end position="348"/>
    </location>
</feature>
<feature type="topological domain" description="Lumenal" evidence="1">
    <location>
        <begin position="1"/>
        <end position="35"/>
    </location>
</feature>
<feature type="transmembrane region" description="Helical" evidence="1">
    <location>
        <begin position="36"/>
        <end position="56"/>
    </location>
</feature>
<feature type="topological domain" description="Cytoplasmic" evidence="1">
    <location>
        <begin position="57"/>
        <end position="348"/>
    </location>
</feature>
<feature type="domain" description="SMP-LTD" evidence="1">
    <location>
        <begin position="114"/>
        <end position="323"/>
    </location>
</feature>
<feature type="region of interest" description="Disordered" evidence="2">
    <location>
        <begin position="328"/>
        <end position="348"/>
    </location>
</feature>